<proteinExistence type="evidence at transcript level"/>
<reference key="1">
    <citation type="submission" date="1997-06" db="EMBL/GenBank/DDBJ databases">
        <title>Molecular cloning and sequence analysis of chalcone synthase cDNAs of Bromheadia finlaysoniana.</title>
        <authorList>
            <person name="Liew C.F."/>
            <person name="Lim S.H."/>
            <person name="Loh C.S."/>
            <person name="Goh C.J."/>
        </authorList>
    </citation>
    <scope>NUCLEOTIDE SEQUENCE [MRNA]</scope>
    <source>
        <tissue>Flower</tissue>
    </source>
</reference>
<feature type="chain" id="PRO_0000215958" description="Chalcone synthase 8">
    <location>
        <begin position="1"/>
        <end position="394"/>
    </location>
</feature>
<feature type="active site" evidence="1">
    <location>
        <position position="165"/>
    </location>
</feature>
<organism>
    <name type="scientific">Bromheadia finlaysoniana</name>
    <name type="common">Orchid</name>
    <dbReference type="NCBI Taxonomy" id="41205"/>
    <lineage>
        <taxon>Eukaryota</taxon>
        <taxon>Viridiplantae</taxon>
        <taxon>Streptophyta</taxon>
        <taxon>Embryophyta</taxon>
        <taxon>Tracheophyta</taxon>
        <taxon>Spermatophyta</taxon>
        <taxon>Magnoliopsida</taxon>
        <taxon>Liliopsida</taxon>
        <taxon>Asparagales</taxon>
        <taxon>Orchidaceae</taxon>
        <taxon>Epidendroideae</taxon>
        <taxon>Vandeae</taxon>
        <taxon>Adrorhizinae</taxon>
        <taxon>Bromheadia</taxon>
    </lineage>
</organism>
<name>CHS8_BROFI</name>
<dbReference type="EC" id="2.3.1.74"/>
<dbReference type="EMBL" id="AF007099">
    <property type="protein sequence ID" value="AAB62876.1"/>
    <property type="molecule type" value="mRNA"/>
</dbReference>
<dbReference type="SMR" id="O23731"/>
<dbReference type="UniPathway" id="UPA00154"/>
<dbReference type="GO" id="GO:0016210">
    <property type="term" value="F:naringenin-chalcone synthase activity"/>
    <property type="evidence" value="ECO:0007669"/>
    <property type="project" value="UniProtKB-EC"/>
</dbReference>
<dbReference type="GO" id="GO:0009813">
    <property type="term" value="P:flavonoid biosynthetic process"/>
    <property type="evidence" value="ECO:0007669"/>
    <property type="project" value="UniProtKB-UniPathway"/>
</dbReference>
<dbReference type="GO" id="GO:0030639">
    <property type="term" value="P:polyketide biosynthetic process"/>
    <property type="evidence" value="ECO:0007669"/>
    <property type="project" value="TreeGrafter"/>
</dbReference>
<dbReference type="CDD" id="cd00831">
    <property type="entry name" value="CHS_like"/>
    <property type="match status" value="1"/>
</dbReference>
<dbReference type="FunFam" id="3.40.47.10:FF:000014">
    <property type="entry name" value="Chalcone synthase 1"/>
    <property type="match status" value="1"/>
</dbReference>
<dbReference type="FunFam" id="3.40.47.10:FF:000025">
    <property type="entry name" value="Chalcone synthase 2"/>
    <property type="match status" value="1"/>
</dbReference>
<dbReference type="Gene3D" id="3.40.47.10">
    <property type="match status" value="2"/>
</dbReference>
<dbReference type="InterPro" id="IPR012328">
    <property type="entry name" value="Chalcone/stilbene_synt_C"/>
</dbReference>
<dbReference type="InterPro" id="IPR001099">
    <property type="entry name" value="Chalcone/stilbene_synt_N"/>
</dbReference>
<dbReference type="InterPro" id="IPR018088">
    <property type="entry name" value="Chalcone/stilbene_synthase_AS"/>
</dbReference>
<dbReference type="InterPro" id="IPR011141">
    <property type="entry name" value="Polyketide_synthase_type-III"/>
</dbReference>
<dbReference type="InterPro" id="IPR016039">
    <property type="entry name" value="Thiolase-like"/>
</dbReference>
<dbReference type="PANTHER" id="PTHR11877:SF14">
    <property type="entry name" value="CHALCONE SYNTHASE"/>
    <property type="match status" value="1"/>
</dbReference>
<dbReference type="PANTHER" id="PTHR11877">
    <property type="entry name" value="HYDROXYMETHYLGLUTARYL-COA SYNTHASE"/>
    <property type="match status" value="1"/>
</dbReference>
<dbReference type="Pfam" id="PF02797">
    <property type="entry name" value="Chal_sti_synt_C"/>
    <property type="match status" value="1"/>
</dbReference>
<dbReference type="Pfam" id="PF00195">
    <property type="entry name" value="Chal_sti_synt_N"/>
    <property type="match status" value="1"/>
</dbReference>
<dbReference type="PIRSF" id="PIRSF000451">
    <property type="entry name" value="PKS_III"/>
    <property type="match status" value="1"/>
</dbReference>
<dbReference type="SUPFAM" id="SSF53901">
    <property type="entry name" value="Thiolase-like"/>
    <property type="match status" value="2"/>
</dbReference>
<dbReference type="PROSITE" id="PS00441">
    <property type="entry name" value="CHALCONE_SYNTH"/>
    <property type="match status" value="1"/>
</dbReference>
<gene>
    <name type="primary">CHS8</name>
</gene>
<sequence length="394" mass="42914">MAPAMEEIRQAQRAEGPAAVLAIGTSTPPNALYQADYPDYYFRITKSEHLTELKEKFKRMCDKSMIKKRYMYLTEEILKENPNICAFMAPSLDARQDIVVTEVPKLAKEAAARAIKEWGHPKSRITHLIFCTTSGIDMPGADYQLTRLLGLRPSVNRFMLYQQGCFAGGTVLRLAKDLAENNAGARVLVVCSEITAVTFRGPSESHLDSLVGQALFGDGAAAIIVGSDPDSATERPLFQLVSASQTILPESEGAIDGHLREIGLTFHLLKDVPGLISKNIQKCLLDAFKPLGVHDWNSIFWIAHPGGPAILDQVEIKLGLKAEKLAASRNVLAEYGNMSSACVLFILDEMRRRSAEAGQATTGEGLEWGVLFGFGPGLTVETIVLRSVPIAGAE</sequence>
<protein>
    <recommendedName>
        <fullName>Chalcone synthase 8</fullName>
        <ecNumber>2.3.1.74</ecNumber>
    </recommendedName>
    <alternativeName>
        <fullName>Naringenin-chalcone synthase 8</fullName>
    </alternativeName>
</protein>
<comment type="function">
    <text>The primary product of this enzyme is 4,2',4',6'-tetrahydroxychalcone (also termed naringenin-chalcone or chalcone) which can under specific conditions spontaneously isomerize into naringenin.</text>
</comment>
<comment type="catalytic activity">
    <reaction evidence="1">
        <text>(E)-4-coumaroyl-CoA + 3 malonyl-CoA + 3 H(+) = 2',4,4',6'-tetrahydroxychalcone + 3 CO2 + 4 CoA</text>
        <dbReference type="Rhea" id="RHEA:11128"/>
        <dbReference type="ChEBI" id="CHEBI:15378"/>
        <dbReference type="ChEBI" id="CHEBI:15413"/>
        <dbReference type="ChEBI" id="CHEBI:16526"/>
        <dbReference type="ChEBI" id="CHEBI:57287"/>
        <dbReference type="ChEBI" id="CHEBI:57384"/>
        <dbReference type="ChEBI" id="CHEBI:85008"/>
        <dbReference type="EC" id="2.3.1.74"/>
    </reaction>
</comment>
<comment type="pathway">
    <text>Secondary metabolite biosynthesis; flavonoid biosynthesis.</text>
</comment>
<comment type="similarity">
    <text evidence="2">Belongs to the thiolase-like superfamily. Chalcone/stilbene synthases family.</text>
</comment>
<keyword id="KW-0012">Acyltransferase</keyword>
<keyword id="KW-0284">Flavonoid biosynthesis</keyword>
<keyword id="KW-0808">Transferase</keyword>
<accession>O23731</accession>
<evidence type="ECO:0000255" key="1">
    <source>
        <dbReference type="PROSITE-ProRule" id="PRU10023"/>
    </source>
</evidence>
<evidence type="ECO:0000305" key="2"/>